<evidence type="ECO:0000250" key="1"/>
<evidence type="ECO:0000250" key="2">
    <source>
        <dbReference type="UniProtKB" id="Q8IWW6"/>
    </source>
</evidence>
<evidence type="ECO:0000255" key="3">
    <source>
        <dbReference type="PROSITE-ProRule" id="PRU00145"/>
    </source>
</evidence>
<evidence type="ECO:0000255" key="4">
    <source>
        <dbReference type="PROSITE-ProRule" id="PRU00172"/>
    </source>
</evidence>
<evidence type="ECO:0000255" key="5">
    <source>
        <dbReference type="PROSITE-ProRule" id="PRU00192"/>
    </source>
</evidence>
<evidence type="ECO:0000255" key="6">
    <source>
        <dbReference type="PROSITE-ProRule" id="PRU00224"/>
    </source>
</evidence>
<evidence type="ECO:0000256" key="7">
    <source>
        <dbReference type="SAM" id="MobiDB-lite"/>
    </source>
</evidence>
<evidence type="ECO:0000305" key="8"/>
<evidence type="ECO:0007744" key="9">
    <source>
    </source>
</evidence>
<evidence type="ECO:0007744" key="10">
    <source>
    </source>
</evidence>
<evidence type="ECO:0007744" key="11">
    <source>
    </source>
</evidence>
<evidence type="ECO:0007744" key="12">
    <source>
    </source>
</evidence>
<evidence type="ECO:0007829" key="13">
    <source>
        <dbReference type="PDB" id="6GVC"/>
    </source>
</evidence>
<feature type="chain" id="PRO_0000056715" description="Rho GTPase-activating protein 12">
    <location>
        <begin position="1"/>
        <end position="838"/>
    </location>
</feature>
<feature type="domain" description="SH3" evidence="5">
    <location>
        <begin position="10"/>
        <end position="72"/>
    </location>
</feature>
<feature type="domain" description="WW 1" evidence="6">
    <location>
        <begin position="263"/>
        <end position="296"/>
    </location>
</feature>
<feature type="domain" description="WW 2" evidence="6">
    <location>
        <begin position="355"/>
        <end position="388"/>
    </location>
</feature>
<feature type="domain" description="PH" evidence="3">
    <location>
        <begin position="466"/>
        <end position="567"/>
    </location>
</feature>
<feature type="domain" description="Rho-GAP" evidence="4">
    <location>
        <begin position="648"/>
        <end position="836"/>
    </location>
</feature>
<feature type="region of interest" description="Disordered" evidence="7">
    <location>
        <begin position="155"/>
        <end position="239"/>
    </location>
</feature>
<feature type="region of interest" description="Disordered" evidence="7">
    <location>
        <begin position="291"/>
        <end position="346"/>
    </location>
</feature>
<feature type="region of interest" description="Disordered" evidence="7">
    <location>
        <begin position="425"/>
        <end position="456"/>
    </location>
</feature>
<feature type="region of interest" description="Disordered" evidence="7">
    <location>
        <begin position="572"/>
        <end position="620"/>
    </location>
</feature>
<feature type="compositionally biased region" description="Polar residues" evidence="7">
    <location>
        <begin position="155"/>
        <end position="172"/>
    </location>
</feature>
<feature type="compositionally biased region" description="Polar residues" evidence="7">
    <location>
        <begin position="189"/>
        <end position="198"/>
    </location>
</feature>
<feature type="compositionally biased region" description="Basic and acidic residues" evidence="7">
    <location>
        <begin position="291"/>
        <end position="302"/>
    </location>
</feature>
<feature type="compositionally biased region" description="Polar residues" evidence="7">
    <location>
        <begin position="303"/>
        <end position="334"/>
    </location>
</feature>
<feature type="compositionally biased region" description="Acidic residues" evidence="7">
    <location>
        <begin position="572"/>
        <end position="582"/>
    </location>
</feature>
<feature type="compositionally biased region" description="Basic and acidic residues" evidence="7">
    <location>
        <begin position="586"/>
        <end position="601"/>
    </location>
</feature>
<feature type="site" description="Arginine finger; crucial for GTP hydrolysis by stabilizing the transition state" evidence="4">
    <location>
        <position position="684"/>
    </location>
</feature>
<feature type="modified residue" description="Phosphoserine" evidence="2">
    <location>
        <position position="163"/>
    </location>
</feature>
<feature type="modified residue" description="Phosphoserine" evidence="10 12">
    <location>
        <position position="199"/>
    </location>
</feature>
<feature type="modified residue" description="Phosphoserine" evidence="12">
    <location>
        <position position="211"/>
    </location>
</feature>
<feature type="modified residue" description="Phosphoserine" evidence="12">
    <location>
        <position position="213"/>
    </location>
</feature>
<feature type="modified residue" description="Phosphothreonine" evidence="2">
    <location>
        <position position="228"/>
    </location>
</feature>
<feature type="modified residue" description="Phosphothreonine" evidence="2">
    <location>
        <position position="229"/>
    </location>
</feature>
<feature type="modified residue" description="Phosphoserine" evidence="10 11 12">
    <location>
        <position position="238"/>
    </location>
</feature>
<feature type="modified residue" description="Phosphotyrosine" evidence="11 12">
    <location>
        <position position="241"/>
    </location>
</feature>
<feature type="modified residue" description="Phosphoserine" evidence="9">
    <location>
        <position position="584"/>
    </location>
</feature>
<feature type="sequence conflict" description="In Ref. 1; BAC27494." evidence="8" ref="1">
    <original>K</original>
    <variation>N</variation>
    <location>
        <position position="42"/>
    </location>
</feature>
<feature type="sequence conflict" description="In Ref. 1; BAC36587." evidence="8" ref="1">
    <original>P</original>
    <variation>A</variation>
    <location>
        <position position="86"/>
    </location>
</feature>
<feature type="sequence conflict" description="In Ref. 1; BAC36587." evidence="8" ref="1">
    <original>A</original>
    <variation>P</variation>
    <location>
        <position position="483"/>
    </location>
</feature>
<feature type="sequence conflict" description="In Ref. 1; BAC36587." evidence="8" ref="1">
    <original>S</original>
    <variation>T</variation>
    <location>
        <position position="530"/>
    </location>
</feature>
<feature type="sequence conflict" description="In Ref. 1; BAC36587." evidence="8" ref="1">
    <original>A</original>
    <variation>T</variation>
    <location>
        <position position="698"/>
    </location>
</feature>
<feature type="helix" evidence="13">
    <location>
        <begin position="616"/>
        <end position="628"/>
    </location>
</feature>
<feature type="helix" evidence="13">
    <location>
        <begin position="632"/>
        <end position="637"/>
    </location>
</feature>
<feature type="helix" evidence="13">
    <location>
        <begin position="650"/>
        <end position="656"/>
    </location>
</feature>
<feature type="strand" evidence="13">
    <location>
        <begin position="659"/>
        <end position="661"/>
    </location>
</feature>
<feature type="helix" evidence="13">
    <location>
        <begin position="663"/>
        <end position="675"/>
    </location>
</feature>
<feature type="turn" evidence="13">
    <location>
        <begin position="676"/>
        <end position="678"/>
    </location>
</feature>
<feature type="turn" evidence="13">
    <location>
        <begin position="680"/>
        <end position="684"/>
    </location>
</feature>
<feature type="helix" evidence="13">
    <location>
        <begin position="689"/>
        <end position="700"/>
    </location>
</feature>
<feature type="helix" evidence="13">
    <location>
        <begin position="710"/>
        <end position="712"/>
    </location>
</feature>
<feature type="helix" evidence="13">
    <location>
        <begin position="715"/>
        <end position="727"/>
    </location>
</feature>
<feature type="helix" evidence="13">
    <location>
        <begin position="739"/>
        <end position="747"/>
    </location>
</feature>
<feature type="helix" evidence="13">
    <location>
        <begin position="750"/>
        <end position="762"/>
    </location>
</feature>
<feature type="helix" evidence="13">
    <location>
        <begin position="766"/>
        <end position="784"/>
    </location>
</feature>
<feature type="helix" evidence="13">
    <location>
        <begin position="786"/>
        <end position="789"/>
    </location>
</feature>
<feature type="helix" evidence="13">
    <location>
        <begin position="793"/>
        <end position="804"/>
    </location>
</feature>
<feature type="helix" evidence="13">
    <location>
        <begin position="818"/>
        <end position="830"/>
    </location>
</feature>
<feature type="helix" evidence="13">
    <location>
        <begin position="832"/>
        <end position="835"/>
    </location>
</feature>
<organism>
    <name type="scientific">Mus musculus</name>
    <name type="common">Mouse</name>
    <dbReference type="NCBI Taxonomy" id="10090"/>
    <lineage>
        <taxon>Eukaryota</taxon>
        <taxon>Metazoa</taxon>
        <taxon>Chordata</taxon>
        <taxon>Craniata</taxon>
        <taxon>Vertebrata</taxon>
        <taxon>Euteleostomi</taxon>
        <taxon>Mammalia</taxon>
        <taxon>Eutheria</taxon>
        <taxon>Euarchontoglires</taxon>
        <taxon>Glires</taxon>
        <taxon>Rodentia</taxon>
        <taxon>Myomorpha</taxon>
        <taxon>Muroidea</taxon>
        <taxon>Muridae</taxon>
        <taxon>Murinae</taxon>
        <taxon>Mus</taxon>
        <taxon>Mus</taxon>
    </lineage>
</organism>
<keyword id="KW-0002">3D-structure</keyword>
<keyword id="KW-0343">GTPase activation</keyword>
<keyword id="KW-0597">Phosphoprotein</keyword>
<keyword id="KW-1185">Reference proteome</keyword>
<keyword id="KW-0677">Repeat</keyword>
<keyword id="KW-0728">SH3 domain</keyword>
<dbReference type="EMBL" id="AK031648">
    <property type="protein sequence ID" value="BAC27494.1"/>
    <property type="molecule type" value="mRNA"/>
</dbReference>
<dbReference type="EMBL" id="AK077063">
    <property type="protein sequence ID" value="BAC36587.1"/>
    <property type="molecule type" value="mRNA"/>
</dbReference>
<dbReference type="CCDS" id="CCDS37723.1"/>
<dbReference type="RefSeq" id="NP_001034781.1">
    <property type="nucleotide sequence ID" value="NM_001039692.1"/>
</dbReference>
<dbReference type="RefSeq" id="NP_083553.2">
    <property type="nucleotide sequence ID" value="NM_029277.2"/>
</dbReference>
<dbReference type="PDB" id="6GVC">
    <property type="method" value="X-ray"/>
    <property type="resolution" value="2.60 A"/>
    <property type="chains" value="Q/R/S/T=615-838"/>
</dbReference>
<dbReference type="PDBsum" id="6GVC"/>
<dbReference type="SMR" id="Q8C0D4"/>
<dbReference type="BioGRID" id="217463">
    <property type="interactions" value="2"/>
</dbReference>
<dbReference type="FunCoup" id="Q8C0D4">
    <property type="interactions" value="2367"/>
</dbReference>
<dbReference type="IntAct" id="Q8C0D4">
    <property type="interactions" value="1"/>
</dbReference>
<dbReference type="MINT" id="Q8C0D4"/>
<dbReference type="STRING" id="10090.ENSMUSP00000138585"/>
<dbReference type="GlyGen" id="Q8C0D4">
    <property type="glycosylation" value="1 site, 1 N-linked glycan (1 site)"/>
</dbReference>
<dbReference type="iPTMnet" id="Q8C0D4"/>
<dbReference type="PhosphoSitePlus" id="Q8C0D4"/>
<dbReference type="jPOST" id="Q8C0D4"/>
<dbReference type="PaxDb" id="10090-ENSMUSP00000138585"/>
<dbReference type="PeptideAtlas" id="Q8C0D4"/>
<dbReference type="ProteomicsDB" id="255263"/>
<dbReference type="Pumba" id="Q8C0D4"/>
<dbReference type="Antibodypedia" id="26325">
    <property type="antibodies" value="63 antibodies from 19 providers"/>
</dbReference>
<dbReference type="DNASU" id="75415"/>
<dbReference type="Ensembl" id="ENSMUST00000182559.8">
    <property type="protein sequence ID" value="ENSMUSP00000138585.2"/>
    <property type="gene ID" value="ENSMUSG00000041225.17"/>
</dbReference>
<dbReference type="GeneID" id="75415"/>
<dbReference type="KEGG" id="mmu:75415"/>
<dbReference type="UCSC" id="uc008dzc.1">
    <property type="organism name" value="mouse"/>
</dbReference>
<dbReference type="AGR" id="MGI:1922665"/>
<dbReference type="CTD" id="94134"/>
<dbReference type="MGI" id="MGI:1922665">
    <property type="gene designation" value="Arhgap12"/>
</dbReference>
<dbReference type="VEuPathDB" id="HostDB:ENSMUSG00000041225"/>
<dbReference type="eggNOG" id="KOG1450">
    <property type="taxonomic scope" value="Eukaryota"/>
</dbReference>
<dbReference type="GeneTree" id="ENSGT00950000182860"/>
<dbReference type="HOGENOM" id="CLU_015883_6_0_1"/>
<dbReference type="InParanoid" id="Q8C0D4"/>
<dbReference type="OMA" id="PECHYAT"/>
<dbReference type="OrthoDB" id="79452at2759"/>
<dbReference type="PhylomeDB" id="Q8C0D4"/>
<dbReference type="TreeFam" id="TF329345"/>
<dbReference type="Reactome" id="R-MMU-9013149">
    <property type="pathway name" value="RAC1 GTPase cycle"/>
</dbReference>
<dbReference type="Reactome" id="R-MMU-9013405">
    <property type="pathway name" value="RHOD GTPase cycle"/>
</dbReference>
<dbReference type="Reactome" id="R-MMU-9013424">
    <property type="pathway name" value="RHOV GTPase cycle"/>
</dbReference>
<dbReference type="Reactome" id="R-MMU-9035034">
    <property type="pathway name" value="RHOF GTPase cycle"/>
</dbReference>
<dbReference type="BioGRID-ORCS" id="75415">
    <property type="hits" value="2 hits in 78 CRISPR screens"/>
</dbReference>
<dbReference type="ChiTaRS" id="Arhgap12">
    <property type="organism name" value="mouse"/>
</dbReference>
<dbReference type="PRO" id="PR:Q8C0D4"/>
<dbReference type="Proteomes" id="UP000000589">
    <property type="component" value="Chromosome 18"/>
</dbReference>
<dbReference type="RNAct" id="Q8C0D4">
    <property type="molecule type" value="protein"/>
</dbReference>
<dbReference type="Bgee" id="ENSMUSG00000041225">
    <property type="expression patterns" value="Expressed in animal zygote and 258 other cell types or tissues"/>
</dbReference>
<dbReference type="ExpressionAtlas" id="Q8C0D4">
    <property type="expression patterns" value="baseline and differential"/>
</dbReference>
<dbReference type="GO" id="GO:0001891">
    <property type="term" value="C:phagocytic cup"/>
    <property type="evidence" value="ECO:0000250"/>
    <property type="project" value="UniProtKB"/>
</dbReference>
<dbReference type="GO" id="GO:0005096">
    <property type="term" value="F:GTPase activator activity"/>
    <property type="evidence" value="ECO:0007669"/>
    <property type="project" value="UniProtKB-KW"/>
</dbReference>
<dbReference type="GO" id="GO:0007015">
    <property type="term" value="P:actin filament organization"/>
    <property type="evidence" value="ECO:0000250"/>
    <property type="project" value="UniProtKB"/>
</dbReference>
<dbReference type="GO" id="GO:0051058">
    <property type="term" value="P:negative regulation of small GTPase mediated signal transduction"/>
    <property type="evidence" value="ECO:0000250"/>
    <property type="project" value="UniProtKB"/>
</dbReference>
<dbReference type="GO" id="GO:0006911">
    <property type="term" value="P:phagocytosis, engulfment"/>
    <property type="evidence" value="ECO:0000250"/>
    <property type="project" value="UniProtKB"/>
</dbReference>
<dbReference type="GO" id="GO:0007165">
    <property type="term" value="P:signal transduction"/>
    <property type="evidence" value="ECO:0007669"/>
    <property type="project" value="InterPro"/>
</dbReference>
<dbReference type="CDD" id="cd13233">
    <property type="entry name" value="PH_ARHGAP9-like"/>
    <property type="match status" value="1"/>
</dbReference>
<dbReference type="CDD" id="cd04403">
    <property type="entry name" value="RhoGAP_ARHGAP27_15_12_9"/>
    <property type="match status" value="1"/>
</dbReference>
<dbReference type="CDD" id="cd12070">
    <property type="entry name" value="SH3_ARHGAP12"/>
    <property type="match status" value="1"/>
</dbReference>
<dbReference type="CDD" id="cd00201">
    <property type="entry name" value="WW"/>
    <property type="match status" value="1"/>
</dbReference>
<dbReference type="FunFam" id="1.10.555.10:FF:000003">
    <property type="entry name" value="Putative rho GTPase-activating protein 12"/>
    <property type="match status" value="1"/>
</dbReference>
<dbReference type="FunFam" id="2.20.70.10:FF:000024">
    <property type="entry name" value="Rho GTPase activating protein 12"/>
    <property type="match status" value="1"/>
</dbReference>
<dbReference type="FunFam" id="2.30.29.30:FF:000100">
    <property type="entry name" value="Rho GTPase activating protein 12"/>
    <property type="match status" value="1"/>
</dbReference>
<dbReference type="FunFam" id="2.30.30.40:FF:000056">
    <property type="entry name" value="rho GTPase-activating protein 12 isoform X1"/>
    <property type="match status" value="1"/>
</dbReference>
<dbReference type="Gene3D" id="2.20.70.10">
    <property type="match status" value="1"/>
</dbReference>
<dbReference type="Gene3D" id="2.30.29.30">
    <property type="entry name" value="Pleckstrin-homology domain (PH domain)/Phosphotyrosine-binding domain (PTB)"/>
    <property type="match status" value="1"/>
</dbReference>
<dbReference type="Gene3D" id="1.10.555.10">
    <property type="entry name" value="Rho GTPase activation protein"/>
    <property type="match status" value="1"/>
</dbReference>
<dbReference type="Gene3D" id="2.30.30.40">
    <property type="entry name" value="SH3 Domains"/>
    <property type="match status" value="1"/>
</dbReference>
<dbReference type="InterPro" id="IPR035491">
    <property type="entry name" value="ARHGAP12_SH3"/>
</dbReference>
<dbReference type="InterPro" id="IPR011993">
    <property type="entry name" value="PH-like_dom_sf"/>
</dbReference>
<dbReference type="InterPro" id="IPR001849">
    <property type="entry name" value="PH_domain"/>
</dbReference>
<dbReference type="InterPro" id="IPR050729">
    <property type="entry name" value="Rho-GAP"/>
</dbReference>
<dbReference type="InterPro" id="IPR008936">
    <property type="entry name" value="Rho_GTPase_activation_prot"/>
</dbReference>
<dbReference type="InterPro" id="IPR000198">
    <property type="entry name" value="RhoGAP_dom"/>
</dbReference>
<dbReference type="InterPro" id="IPR036028">
    <property type="entry name" value="SH3-like_dom_sf"/>
</dbReference>
<dbReference type="InterPro" id="IPR001452">
    <property type="entry name" value="SH3_domain"/>
</dbReference>
<dbReference type="InterPro" id="IPR001202">
    <property type="entry name" value="WW_dom"/>
</dbReference>
<dbReference type="InterPro" id="IPR036020">
    <property type="entry name" value="WW_dom_sf"/>
</dbReference>
<dbReference type="PANTHER" id="PTHR23176:SF107">
    <property type="entry name" value="RHO GTPASE-ACTIVATING PROTEIN 12"/>
    <property type="match status" value="1"/>
</dbReference>
<dbReference type="PANTHER" id="PTHR23176">
    <property type="entry name" value="RHO/RAC/CDC GTPASE-ACTIVATING PROTEIN"/>
    <property type="match status" value="1"/>
</dbReference>
<dbReference type="Pfam" id="PF00169">
    <property type="entry name" value="PH"/>
    <property type="match status" value="1"/>
</dbReference>
<dbReference type="Pfam" id="PF00620">
    <property type="entry name" value="RhoGAP"/>
    <property type="match status" value="1"/>
</dbReference>
<dbReference type="Pfam" id="PF16618">
    <property type="entry name" value="SH3-WW_linker"/>
    <property type="match status" value="1"/>
</dbReference>
<dbReference type="Pfam" id="PF00397">
    <property type="entry name" value="WW"/>
    <property type="match status" value="1"/>
</dbReference>
<dbReference type="SMART" id="SM00233">
    <property type="entry name" value="PH"/>
    <property type="match status" value="1"/>
</dbReference>
<dbReference type="SMART" id="SM00324">
    <property type="entry name" value="RhoGAP"/>
    <property type="match status" value="1"/>
</dbReference>
<dbReference type="SMART" id="SM00326">
    <property type="entry name" value="SH3"/>
    <property type="match status" value="1"/>
</dbReference>
<dbReference type="SMART" id="SM00456">
    <property type="entry name" value="WW"/>
    <property type="match status" value="2"/>
</dbReference>
<dbReference type="SUPFAM" id="SSF48350">
    <property type="entry name" value="GTPase activation domain, GAP"/>
    <property type="match status" value="1"/>
</dbReference>
<dbReference type="SUPFAM" id="SSF50729">
    <property type="entry name" value="PH domain-like"/>
    <property type="match status" value="1"/>
</dbReference>
<dbReference type="SUPFAM" id="SSF50044">
    <property type="entry name" value="SH3-domain"/>
    <property type="match status" value="1"/>
</dbReference>
<dbReference type="SUPFAM" id="SSF51045">
    <property type="entry name" value="WW domain"/>
    <property type="match status" value="2"/>
</dbReference>
<dbReference type="PROSITE" id="PS50003">
    <property type="entry name" value="PH_DOMAIN"/>
    <property type="match status" value="1"/>
</dbReference>
<dbReference type="PROSITE" id="PS50238">
    <property type="entry name" value="RHOGAP"/>
    <property type="match status" value="1"/>
</dbReference>
<dbReference type="PROSITE" id="PS50002">
    <property type="entry name" value="SH3"/>
    <property type="match status" value="1"/>
</dbReference>
<dbReference type="PROSITE" id="PS50020">
    <property type="entry name" value="WW_DOMAIN_2"/>
    <property type="match status" value="2"/>
</dbReference>
<proteinExistence type="evidence at protein level"/>
<sequence>MAERSGKITAGQAYIEVEYDYEYDAKDRKIVIRQGERYLLVKKTNDDWWQVRPDENSKAFYVPAQYVKEVTRKALMPPVKQATGLPNNSMKTIQSMHLQRSTENVNKMPELSSFGKPSSSVQGTGLIRDANQNFGSNYNSGQTLNLSLDLTHNNGKFNSDSHSPKVSSQNRTRLFGHFPGPEFLDIEKTSFSQEQSCDSAGEGSERIQQDSESGDELSSSSTEQMRATTPPNQGRPDSPVYANLQELKISQSALPPLPGSPAIQVNGEWETHKDSSGRCYYYNRTTQERTWKPPRWARDVSTSRDFQSPGEQEPLSSEENYHSSCFSQSDSQCGSPPRGWSEELDERGHTLYTSDYTKEKWLKHVDDQGRQYYYSADGSRSEWELPKYNASSQQQREIIKSRSLDRRLQEPIVLTKWRHSTIVLDSNDKDSPTTTKLCLPENESPPTSSKHQDPGQEKYGLLNVTKITENGKKVRKNWLSSWAVLQGSSLLFTKTQGSSTSWFGSNQSKPEFTVDLKGAVIEMASKDKSSKKNVFELKTRQGTELLIQSDNDAVINDWFKVLSSTINNQVAEADEAAEEETPDSPGVEKHDKEKDQKELKKLRSMKGSSMDSSEQKKTKKNLKKFLTRRPTLQAVREKGYIKDQVFGSNLANLCQRENGTVPKFVKLCIEHVEEHGLDVDGIYRVSGNLAVIQKLRFAVNHDEKLDLNDSKWEDIHVITGALKMFFRELPEPLFTFNHFNDFVNAIKQEPRQRVTAVKDLIRQLPKPNQDTMQILFRHLKRVIENGEKNRMTYQSIAIVFGPTLLKPERETGNIAVHTVYQNQIVELILLELSTVFGR</sequence>
<reference key="1">
    <citation type="journal article" date="2005" name="Science">
        <title>The transcriptional landscape of the mammalian genome.</title>
        <authorList>
            <person name="Carninci P."/>
            <person name="Kasukawa T."/>
            <person name="Katayama S."/>
            <person name="Gough J."/>
            <person name="Frith M.C."/>
            <person name="Maeda N."/>
            <person name="Oyama R."/>
            <person name="Ravasi T."/>
            <person name="Lenhard B."/>
            <person name="Wells C."/>
            <person name="Kodzius R."/>
            <person name="Shimokawa K."/>
            <person name="Bajic V.B."/>
            <person name="Brenner S.E."/>
            <person name="Batalov S."/>
            <person name="Forrest A.R."/>
            <person name="Zavolan M."/>
            <person name="Davis M.J."/>
            <person name="Wilming L.G."/>
            <person name="Aidinis V."/>
            <person name="Allen J.E."/>
            <person name="Ambesi-Impiombato A."/>
            <person name="Apweiler R."/>
            <person name="Aturaliya R.N."/>
            <person name="Bailey T.L."/>
            <person name="Bansal M."/>
            <person name="Baxter L."/>
            <person name="Beisel K.W."/>
            <person name="Bersano T."/>
            <person name="Bono H."/>
            <person name="Chalk A.M."/>
            <person name="Chiu K.P."/>
            <person name="Choudhary V."/>
            <person name="Christoffels A."/>
            <person name="Clutterbuck D.R."/>
            <person name="Crowe M.L."/>
            <person name="Dalla E."/>
            <person name="Dalrymple B.P."/>
            <person name="de Bono B."/>
            <person name="Della Gatta G."/>
            <person name="di Bernardo D."/>
            <person name="Down T."/>
            <person name="Engstrom P."/>
            <person name="Fagiolini M."/>
            <person name="Faulkner G."/>
            <person name="Fletcher C.F."/>
            <person name="Fukushima T."/>
            <person name="Furuno M."/>
            <person name="Futaki S."/>
            <person name="Gariboldi M."/>
            <person name="Georgii-Hemming P."/>
            <person name="Gingeras T.R."/>
            <person name="Gojobori T."/>
            <person name="Green R.E."/>
            <person name="Gustincich S."/>
            <person name="Harbers M."/>
            <person name="Hayashi Y."/>
            <person name="Hensch T.K."/>
            <person name="Hirokawa N."/>
            <person name="Hill D."/>
            <person name="Huminiecki L."/>
            <person name="Iacono M."/>
            <person name="Ikeo K."/>
            <person name="Iwama A."/>
            <person name="Ishikawa T."/>
            <person name="Jakt M."/>
            <person name="Kanapin A."/>
            <person name="Katoh M."/>
            <person name="Kawasawa Y."/>
            <person name="Kelso J."/>
            <person name="Kitamura H."/>
            <person name="Kitano H."/>
            <person name="Kollias G."/>
            <person name="Krishnan S.P."/>
            <person name="Kruger A."/>
            <person name="Kummerfeld S.K."/>
            <person name="Kurochkin I.V."/>
            <person name="Lareau L.F."/>
            <person name="Lazarevic D."/>
            <person name="Lipovich L."/>
            <person name="Liu J."/>
            <person name="Liuni S."/>
            <person name="McWilliam S."/>
            <person name="Madan Babu M."/>
            <person name="Madera M."/>
            <person name="Marchionni L."/>
            <person name="Matsuda H."/>
            <person name="Matsuzawa S."/>
            <person name="Miki H."/>
            <person name="Mignone F."/>
            <person name="Miyake S."/>
            <person name="Morris K."/>
            <person name="Mottagui-Tabar S."/>
            <person name="Mulder N."/>
            <person name="Nakano N."/>
            <person name="Nakauchi H."/>
            <person name="Ng P."/>
            <person name="Nilsson R."/>
            <person name="Nishiguchi S."/>
            <person name="Nishikawa S."/>
            <person name="Nori F."/>
            <person name="Ohara O."/>
            <person name="Okazaki Y."/>
            <person name="Orlando V."/>
            <person name="Pang K.C."/>
            <person name="Pavan W.J."/>
            <person name="Pavesi G."/>
            <person name="Pesole G."/>
            <person name="Petrovsky N."/>
            <person name="Piazza S."/>
            <person name="Reed J."/>
            <person name="Reid J.F."/>
            <person name="Ring B.Z."/>
            <person name="Ringwald M."/>
            <person name="Rost B."/>
            <person name="Ruan Y."/>
            <person name="Salzberg S.L."/>
            <person name="Sandelin A."/>
            <person name="Schneider C."/>
            <person name="Schoenbach C."/>
            <person name="Sekiguchi K."/>
            <person name="Semple C.A."/>
            <person name="Seno S."/>
            <person name="Sessa L."/>
            <person name="Sheng Y."/>
            <person name="Shibata Y."/>
            <person name="Shimada H."/>
            <person name="Shimada K."/>
            <person name="Silva D."/>
            <person name="Sinclair B."/>
            <person name="Sperling S."/>
            <person name="Stupka E."/>
            <person name="Sugiura K."/>
            <person name="Sultana R."/>
            <person name="Takenaka Y."/>
            <person name="Taki K."/>
            <person name="Tammoja K."/>
            <person name="Tan S.L."/>
            <person name="Tang S."/>
            <person name="Taylor M.S."/>
            <person name="Tegner J."/>
            <person name="Teichmann S.A."/>
            <person name="Ueda H.R."/>
            <person name="van Nimwegen E."/>
            <person name="Verardo R."/>
            <person name="Wei C.L."/>
            <person name="Yagi K."/>
            <person name="Yamanishi H."/>
            <person name="Zabarovsky E."/>
            <person name="Zhu S."/>
            <person name="Zimmer A."/>
            <person name="Hide W."/>
            <person name="Bult C."/>
            <person name="Grimmond S.M."/>
            <person name="Teasdale R.D."/>
            <person name="Liu E.T."/>
            <person name="Brusic V."/>
            <person name="Quackenbush J."/>
            <person name="Wahlestedt C."/>
            <person name="Mattick J.S."/>
            <person name="Hume D.A."/>
            <person name="Kai C."/>
            <person name="Sasaki D."/>
            <person name="Tomaru Y."/>
            <person name="Fukuda S."/>
            <person name="Kanamori-Katayama M."/>
            <person name="Suzuki M."/>
            <person name="Aoki J."/>
            <person name="Arakawa T."/>
            <person name="Iida J."/>
            <person name="Imamura K."/>
            <person name="Itoh M."/>
            <person name="Kato T."/>
            <person name="Kawaji H."/>
            <person name="Kawagashira N."/>
            <person name="Kawashima T."/>
            <person name="Kojima M."/>
            <person name="Kondo S."/>
            <person name="Konno H."/>
            <person name="Nakano K."/>
            <person name="Ninomiya N."/>
            <person name="Nishio T."/>
            <person name="Okada M."/>
            <person name="Plessy C."/>
            <person name="Shibata K."/>
            <person name="Shiraki T."/>
            <person name="Suzuki S."/>
            <person name="Tagami M."/>
            <person name="Waki K."/>
            <person name="Watahiki A."/>
            <person name="Okamura-Oho Y."/>
            <person name="Suzuki H."/>
            <person name="Kawai J."/>
            <person name="Hayashizaki Y."/>
        </authorList>
    </citation>
    <scope>NUCLEOTIDE SEQUENCE [LARGE SCALE MRNA]</scope>
    <source>
        <strain>C57BL/6J</strain>
        <tissue>Testis</tissue>
    </source>
</reference>
<reference key="2">
    <citation type="journal article" date="2004" name="Mol. Cell. Proteomics">
        <title>Phosphoproteomic analysis of the developing mouse brain.</title>
        <authorList>
            <person name="Ballif B.A."/>
            <person name="Villen J."/>
            <person name="Beausoleil S.A."/>
            <person name="Schwartz D."/>
            <person name="Gygi S.P."/>
        </authorList>
    </citation>
    <scope>PHOSPHORYLATION [LARGE SCALE ANALYSIS] AT SER-584</scope>
    <scope>IDENTIFICATION BY MASS SPECTROMETRY [LARGE SCALE ANALYSIS]</scope>
    <source>
        <tissue>Embryonic brain</tissue>
    </source>
</reference>
<reference key="3">
    <citation type="journal article" date="2007" name="J. Immunol.">
        <title>Quantitative time-resolved phosphoproteomic analysis of mast cell signaling.</title>
        <authorList>
            <person name="Cao L."/>
            <person name="Yu K."/>
            <person name="Banh C."/>
            <person name="Nguyen V."/>
            <person name="Ritz A."/>
            <person name="Raphael B.J."/>
            <person name="Kawakami Y."/>
            <person name="Kawakami T."/>
            <person name="Salomon A.R."/>
        </authorList>
    </citation>
    <scope>PHOSPHORYLATION [LARGE SCALE ANALYSIS] AT SER-238 AND TYR-241</scope>
    <scope>IDENTIFICATION BY MASS SPECTROMETRY [LARGE SCALE ANALYSIS]</scope>
    <source>
        <tissue>Mast cell</tissue>
    </source>
</reference>
<reference key="4">
    <citation type="journal article" date="2007" name="Proc. Natl. Acad. Sci. U.S.A.">
        <title>Large-scale phosphorylation analysis of mouse liver.</title>
        <authorList>
            <person name="Villen J."/>
            <person name="Beausoleil S.A."/>
            <person name="Gerber S.A."/>
            <person name="Gygi S.P."/>
        </authorList>
    </citation>
    <scope>PHOSPHORYLATION [LARGE SCALE ANALYSIS] AT SER-199 AND SER-238</scope>
    <scope>IDENTIFICATION BY MASS SPECTROMETRY [LARGE SCALE ANALYSIS]</scope>
    <source>
        <tissue>Liver</tissue>
    </source>
</reference>
<reference key="5">
    <citation type="journal article" date="2009" name="Mol. Cell. Proteomics">
        <title>Large scale localization of protein phosphorylation by use of electron capture dissociation mass spectrometry.</title>
        <authorList>
            <person name="Sweet S.M."/>
            <person name="Bailey C.M."/>
            <person name="Cunningham D.L."/>
            <person name="Heath J.K."/>
            <person name="Cooper H.J."/>
        </authorList>
    </citation>
    <scope>IDENTIFICATION BY MASS SPECTROMETRY [LARGE SCALE ANALYSIS]</scope>
    <source>
        <tissue>Embryonic fibroblast</tissue>
    </source>
</reference>
<reference key="6">
    <citation type="journal article" date="2010" name="Cell">
        <title>A tissue-specific atlas of mouse protein phosphorylation and expression.</title>
        <authorList>
            <person name="Huttlin E.L."/>
            <person name="Jedrychowski M.P."/>
            <person name="Elias J.E."/>
            <person name="Goswami T."/>
            <person name="Rad R."/>
            <person name="Beausoleil S.A."/>
            <person name="Villen J."/>
            <person name="Haas W."/>
            <person name="Sowa M.E."/>
            <person name="Gygi S.P."/>
        </authorList>
    </citation>
    <scope>PHOSPHORYLATION [LARGE SCALE ANALYSIS] AT SER-199; SER-211; SER-213; SER-238 AND TYR-241</scope>
    <scope>IDENTIFICATION BY MASS SPECTROMETRY [LARGE SCALE ANALYSIS]</scope>
    <source>
        <tissue>Brain</tissue>
        <tissue>Brown adipose tissue</tissue>
        <tissue>Heart</tissue>
        <tissue>Kidney</tissue>
        <tissue>Liver</tissue>
        <tissue>Lung</tissue>
        <tissue>Pancreas</tissue>
        <tissue>Spleen</tissue>
        <tissue>Testis</tissue>
    </source>
</reference>
<gene>
    <name type="primary">Arhgap12</name>
</gene>
<accession>Q8C0D4</accession>
<accession>Q8BVP8</accession>
<comment type="function">
    <text evidence="1">GTPase activator for the Rho-type GTPases by converting them to an inactive GDP-bound state.</text>
</comment>
<protein>
    <recommendedName>
        <fullName>Rho GTPase-activating protein 12</fullName>
    </recommendedName>
    <alternativeName>
        <fullName>Rho-type GTPase-activating protein 12</fullName>
    </alternativeName>
</protein>
<name>RHG12_MOUSE</name>